<accession>Q95921</accession>
<feature type="chain" id="PRO_0000117799" description="NADH-ubiquinone oxidoreductase chain 3">
    <location>
        <begin position="1"/>
        <end position="115"/>
    </location>
</feature>
<feature type="transmembrane region" description="Helical" evidence="3">
    <location>
        <begin position="4"/>
        <end position="24"/>
    </location>
</feature>
<feature type="transmembrane region" description="Helical" evidence="3">
    <location>
        <begin position="55"/>
        <end position="75"/>
    </location>
</feature>
<feature type="transmembrane region" description="Helical" evidence="3">
    <location>
        <begin position="83"/>
        <end position="103"/>
    </location>
</feature>
<proteinExistence type="inferred from homology"/>
<organism>
    <name type="scientific">Peromyscus polionotus</name>
    <name type="common">Oldfield mouse</name>
    <dbReference type="NCBI Taxonomy" id="42413"/>
    <lineage>
        <taxon>Eukaryota</taxon>
        <taxon>Metazoa</taxon>
        <taxon>Chordata</taxon>
        <taxon>Craniata</taxon>
        <taxon>Vertebrata</taxon>
        <taxon>Euteleostomi</taxon>
        <taxon>Mammalia</taxon>
        <taxon>Eutheria</taxon>
        <taxon>Euarchontoglires</taxon>
        <taxon>Glires</taxon>
        <taxon>Rodentia</taxon>
        <taxon>Myomorpha</taxon>
        <taxon>Muroidea</taxon>
        <taxon>Cricetidae</taxon>
        <taxon>Neotominae</taxon>
        <taxon>Peromyscus</taxon>
    </lineage>
</organism>
<keyword id="KW-0249">Electron transport</keyword>
<keyword id="KW-0472">Membrane</keyword>
<keyword id="KW-0496">Mitochondrion</keyword>
<keyword id="KW-0999">Mitochondrion inner membrane</keyword>
<keyword id="KW-0520">NAD</keyword>
<keyword id="KW-0679">Respiratory chain</keyword>
<keyword id="KW-1278">Translocase</keyword>
<keyword id="KW-0812">Transmembrane</keyword>
<keyword id="KW-1133">Transmembrane helix</keyword>
<keyword id="KW-0813">Transport</keyword>
<keyword id="KW-0830">Ubiquinone</keyword>
<geneLocation type="mitochondrion"/>
<evidence type="ECO:0000250" key="1">
    <source>
        <dbReference type="UniProtKB" id="P03897"/>
    </source>
</evidence>
<evidence type="ECO:0000250" key="2">
    <source>
        <dbReference type="UniProtKB" id="P03898"/>
    </source>
</evidence>
<evidence type="ECO:0000255" key="3"/>
<evidence type="ECO:0000305" key="4"/>
<comment type="function">
    <text evidence="1">Core subunit of the mitochondrial membrane respiratory chain NADH dehydrogenase (Complex I) which catalyzes electron transfer from NADH through the respiratory chain, using ubiquinone as an electron acceptor. Essential for the catalytic activity of complex I.</text>
</comment>
<comment type="catalytic activity">
    <reaction evidence="1">
        <text>a ubiquinone + NADH + 5 H(+)(in) = a ubiquinol + NAD(+) + 4 H(+)(out)</text>
        <dbReference type="Rhea" id="RHEA:29091"/>
        <dbReference type="Rhea" id="RHEA-COMP:9565"/>
        <dbReference type="Rhea" id="RHEA-COMP:9566"/>
        <dbReference type="ChEBI" id="CHEBI:15378"/>
        <dbReference type="ChEBI" id="CHEBI:16389"/>
        <dbReference type="ChEBI" id="CHEBI:17976"/>
        <dbReference type="ChEBI" id="CHEBI:57540"/>
        <dbReference type="ChEBI" id="CHEBI:57945"/>
        <dbReference type="EC" id="7.1.1.2"/>
    </reaction>
</comment>
<comment type="subunit">
    <text evidence="1">Core subunit of respiratory chain NADH dehydrogenase (Complex I) which is composed of 45 different subunits. Interacts with TMEM186. Interacts with TMEM242 (By similarity).</text>
</comment>
<comment type="subcellular location">
    <subcellularLocation>
        <location evidence="2">Mitochondrion inner membrane</location>
        <topology evidence="3">Multi-pass membrane protein</topology>
    </subcellularLocation>
</comment>
<comment type="similarity">
    <text evidence="4">Belongs to the complex I subunit 3 family.</text>
</comment>
<name>NU3M_PERPL</name>
<gene>
    <name evidence="1" type="primary">MT-ND3</name>
    <name type="synonym">MTND3</name>
    <name type="synonym">NADH3</name>
    <name type="synonym">ND3</name>
</gene>
<reference key="1">
    <citation type="submission" date="1995-11" db="EMBL/GenBank/DDBJ databases">
        <title>Mitochondrial DNA analysis of the systematic relationships within the Peromyscus maniculatus species group.</title>
        <authorList>
            <person name="Hogan K.M."/>
            <person name="Davis S.K."/>
            <person name="Greenbaum I.F."/>
        </authorList>
    </citation>
    <scope>NUCLEOTIDE SEQUENCE [GENOMIC DNA]</scope>
</reference>
<dbReference type="EC" id="7.1.1.2" evidence="1"/>
<dbReference type="EMBL" id="U40254">
    <property type="protein sequence ID" value="AAB17933.1"/>
    <property type="molecule type" value="Genomic_DNA"/>
</dbReference>
<dbReference type="SMR" id="Q95921"/>
<dbReference type="GO" id="GO:0005743">
    <property type="term" value="C:mitochondrial inner membrane"/>
    <property type="evidence" value="ECO:0000250"/>
    <property type="project" value="UniProtKB"/>
</dbReference>
<dbReference type="GO" id="GO:0030964">
    <property type="term" value="C:NADH dehydrogenase complex"/>
    <property type="evidence" value="ECO:0007669"/>
    <property type="project" value="TreeGrafter"/>
</dbReference>
<dbReference type="GO" id="GO:0008137">
    <property type="term" value="F:NADH dehydrogenase (ubiquinone) activity"/>
    <property type="evidence" value="ECO:0000250"/>
    <property type="project" value="UniProtKB"/>
</dbReference>
<dbReference type="GO" id="GO:0006120">
    <property type="term" value="P:mitochondrial electron transport, NADH to ubiquinone"/>
    <property type="evidence" value="ECO:0000250"/>
    <property type="project" value="UniProtKB"/>
</dbReference>
<dbReference type="FunFam" id="1.20.58.1610:FF:000004">
    <property type="entry name" value="NADH-quinone oxidoreductase subunit A"/>
    <property type="match status" value="1"/>
</dbReference>
<dbReference type="Gene3D" id="1.20.58.1610">
    <property type="entry name" value="NADH:ubiquinone/plastoquinone oxidoreductase, chain 3"/>
    <property type="match status" value="1"/>
</dbReference>
<dbReference type="InterPro" id="IPR000440">
    <property type="entry name" value="NADH_UbQ/plastoQ_OxRdtase_su3"/>
</dbReference>
<dbReference type="InterPro" id="IPR038430">
    <property type="entry name" value="NDAH_ubi_oxred_su3_sf"/>
</dbReference>
<dbReference type="PANTHER" id="PTHR11058">
    <property type="entry name" value="NADH-UBIQUINONE OXIDOREDUCTASE CHAIN 3"/>
    <property type="match status" value="1"/>
</dbReference>
<dbReference type="PANTHER" id="PTHR11058:SF9">
    <property type="entry name" value="NADH-UBIQUINONE OXIDOREDUCTASE CHAIN 3"/>
    <property type="match status" value="1"/>
</dbReference>
<dbReference type="Pfam" id="PF00507">
    <property type="entry name" value="Oxidored_q4"/>
    <property type="match status" value="1"/>
</dbReference>
<protein>
    <recommendedName>
        <fullName evidence="1">NADH-ubiquinone oxidoreductase chain 3</fullName>
        <ecNumber evidence="1">7.1.1.2</ecNumber>
    </recommendedName>
    <alternativeName>
        <fullName>NADH dehydrogenase subunit 3</fullName>
    </alternativeName>
</protein>
<sequence length="115" mass="13217">MNMLTALLVNITLSMLLIIIAFWLPQLNLYTEKANPYECGFDPMGSARLPFSMKFFLVAITFLLFDLEIALLLPLPWAIQMYYINIMMSTAFILVSVLALGLAYEWLQKGLEWTE</sequence>